<feature type="chain" id="PRO_0000097371" description="Ribonuclease E">
    <location>
        <begin position="1"/>
        <end position="968"/>
    </location>
</feature>
<feature type="domain" description="S1 motif" evidence="1">
    <location>
        <begin position="39"/>
        <end position="119"/>
    </location>
</feature>
<feature type="region of interest" description="Required for zinc-mediated homotetramerization and catalytic activity" evidence="1">
    <location>
        <begin position="404"/>
        <end position="407"/>
    </location>
</feature>
<feature type="region of interest" description="Disordered" evidence="2">
    <location>
        <begin position="947"/>
        <end position="968"/>
    </location>
</feature>
<feature type="compositionally biased region" description="Polar residues" evidence="2">
    <location>
        <begin position="955"/>
        <end position="968"/>
    </location>
</feature>
<feature type="binding site" evidence="1">
    <location>
        <position position="303"/>
    </location>
    <ligand>
        <name>Mg(2+)</name>
        <dbReference type="ChEBI" id="CHEBI:18420"/>
        <note>catalytic</note>
    </ligand>
</feature>
<feature type="binding site" evidence="1">
    <location>
        <position position="346"/>
    </location>
    <ligand>
        <name>Mg(2+)</name>
        <dbReference type="ChEBI" id="CHEBI:18420"/>
        <note>catalytic</note>
    </ligand>
</feature>
<feature type="binding site" evidence="1">
    <location>
        <position position="404"/>
    </location>
    <ligand>
        <name>Zn(2+)</name>
        <dbReference type="ChEBI" id="CHEBI:29105"/>
        <note>ligand shared between dimeric partners</note>
    </ligand>
</feature>
<feature type="binding site" evidence="1">
    <location>
        <position position="407"/>
    </location>
    <ligand>
        <name>Zn(2+)</name>
        <dbReference type="ChEBI" id="CHEBI:29105"/>
        <note>ligand shared between dimeric partners</note>
    </ligand>
</feature>
<keyword id="KW-0997">Cell inner membrane</keyword>
<keyword id="KW-1003">Cell membrane</keyword>
<keyword id="KW-0963">Cytoplasm</keyword>
<keyword id="KW-0255">Endonuclease</keyword>
<keyword id="KW-0378">Hydrolase</keyword>
<keyword id="KW-0460">Magnesium</keyword>
<keyword id="KW-0472">Membrane</keyword>
<keyword id="KW-0479">Metal-binding</keyword>
<keyword id="KW-0540">Nuclease</keyword>
<keyword id="KW-0694">RNA-binding</keyword>
<keyword id="KW-0698">rRNA processing</keyword>
<keyword id="KW-0699">rRNA-binding</keyword>
<keyword id="KW-0819">tRNA processing</keyword>
<keyword id="KW-0820">tRNA-binding</keyword>
<keyword id="KW-0862">Zinc</keyword>
<evidence type="ECO:0000255" key="1">
    <source>
        <dbReference type="HAMAP-Rule" id="MF_00970"/>
    </source>
</evidence>
<evidence type="ECO:0000256" key="2">
    <source>
        <dbReference type="SAM" id="MobiDB-lite"/>
    </source>
</evidence>
<reference key="1">
    <citation type="journal article" date="2002" name="Science">
        <title>50 million years of genomic stasis in endosymbiotic bacteria.</title>
        <authorList>
            <person name="Tamas I."/>
            <person name="Klasson L."/>
            <person name="Canbaeck B."/>
            <person name="Naeslund A.K."/>
            <person name="Eriksson A.-S."/>
            <person name="Wernegreen J.J."/>
            <person name="Sandstroem J.P."/>
            <person name="Moran N.A."/>
            <person name="Andersson S.G.E."/>
        </authorList>
    </citation>
    <scope>NUCLEOTIDE SEQUENCE [LARGE SCALE GENOMIC DNA]</scope>
    <source>
        <strain>Sg</strain>
    </source>
</reference>
<sequence length="968" mass="112656">MKRMLINATQQEELRVALVDGQRLYDLDIESSRSEQKKSNIYKGKITRIEPSLEAVFIDYGMEKHGFLPLKEISKNYFPENYNCDVRLNIKDILREGQELIVQINKEERGTKGAALTTFITLAGSYLVLMPNNPKIAGISRRVEGSDRIELKELLSSLKIPEKMGLIIRTAGVGKSIKSLQWDLSLRLKHWNAIKKASKKKSAPFLIYQESNVIVRAFRDYLRQDIGEILIDNPKILDIAREHITALGRPDFINKIKLYTGEIPLFSYYQIESQIDSAFQRKVRLPSGGSIMVDTTEALTAIDINSSRSTRGADIETTAFNTNLEAVEEISRQLRLRDLGGLIVIDFIDMTTISHQKIIENKLREIVREDRARIQIGHISKFGLLEMSRQRLSSSLGESSHHICPRCTGTGTIRDNESLSLSILRLIEEEALKENTYEVHAIVPIEIACYLLNEKREAVYAIEKRQAGGKTIIVPNKNMKTPHYLVSRIRKGEQIRSMSYCLSNVRKNKIFNNIKKEIVDKKHKLNSTLTNISLSDDSFDKQKEEKEKFLRKKNYNNSIINALFNNKNLFFKFIVWIKNSFLKKHIFVKNESFKRNIFQNKKNILFAKKEEFNSIEEIHKKDNQVSSIDNNKKKQLLNKVKKNNNHQYSHVFDNNTKYTSLKKIDFQKNTIDFELNSLNFLKKNNFYIFSKYNFLYTKKYAKNKFKDFENIKSQNDMICYESFQKDLENNTSFKKKLLYNIIFNNCYPNNILVNINSTIFQIYKNSEFFKFFPIKISILMTPLNIFSLELILEPSSKKCSSFKENQVKKRLRINNYKKLNSSFIHKKNNFVKNSVLWPKKFTTEEIKINHLYKKNKKNTKSYFFETSFKYKTVTKNISKLKVKLTSKKNDYLISNQKKLFLNKTLKKENTKNKSSAPITKIFSDVFLSKNQKIMNSSIFLKKSNKKIKNSAGAHSATNFSTSPVKKSE</sequence>
<proteinExistence type="inferred from homology"/>
<dbReference type="EC" id="3.1.26.12" evidence="1"/>
<dbReference type="EMBL" id="AE013218">
    <property type="protein sequence ID" value="AAM67889.1"/>
    <property type="molecule type" value="Genomic_DNA"/>
</dbReference>
<dbReference type="RefSeq" id="WP_011053856.1">
    <property type="nucleotide sequence ID" value="NC_004061.1"/>
</dbReference>
<dbReference type="SMR" id="Q8K9J9"/>
<dbReference type="STRING" id="198804.BUsg_335"/>
<dbReference type="GeneID" id="93003806"/>
<dbReference type="KEGG" id="bas:BUsg_335"/>
<dbReference type="eggNOG" id="COG1530">
    <property type="taxonomic scope" value="Bacteria"/>
</dbReference>
<dbReference type="HOGENOM" id="CLU_003468_5_4_6"/>
<dbReference type="Proteomes" id="UP000000416">
    <property type="component" value="Chromosome"/>
</dbReference>
<dbReference type="GO" id="GO:0005737">
    <property type="term" value="C:cytoplasm"/>
    <property type="evidence" value="ECO:0007669"/>
    <property type="project" value="UniProtKB-SubCell"/>
</dbReference>
<dbReference type="GO" id="GO:0009898">
    <property type="term" value="C:cytoplasmic side of plasma membrane"/>
    <property type="evidence" value="ECO:0007669"/>
    <property type="project" value="UniProtKB-UniRule"/>
</dbReference>
<dbReference type="GO" id="GO:0000287">
    <property type="term" value="F:magnesium ion binding"/>
    <property type="evidence" value="ECO:0007669"/>
    <property type="project" value="UniProtKB-UniRule"/>
</dbReference>
<dbReference type="GO" id="GO:0008995">
    <property type="term" value="F:ribonuclease E activity"/>
    <property type="evidence" value="ECO:0007669"/>
    <property type="project" value="InterPro"/>
</dbReference>
<dbReference type="GO" id="GO:0004521">
    <property type="term" value="F:RNA endonuclease activity"/>
    <property type="evidence" value="ECO:0007669"/>
    <property type="project" value="UniProtKB-UniRule"/>
</dbReference>
<dbReference type="GO" id="GO:0019843">
    <property type="term" value="F:rRNA binding"/>
    <property type="evidence" value="ECO:0007669"/>
    <property type="project" value="UniProtKB-KW"/>
</dbReference>
<dbReference type="GO" id="GO:0000049">
    <property type="term" value="F:tRNA binding"/>
    <property type="evidence" value="ECO:0007669"/>
    <property type="project" value="UniProtKB-KW"/>
</dbReference>
<dbReference type="GO" id="GO:0008270">
    <property type="term" value="F:zinc ion binding"/>
    <property type="evidence" value="ECO:0007669"/>
    <property type="project" value="UniProtKB-UniRule"/>
</dbReference>
<dbReference type="GO" id="GO:0006402">
    <property type="term" value="P:mRNA catabolic process"/>
    <property type="evidence" value="ECO:0007669"/>
    <property type="project" value="UniProtKB-UniRule"/>
</dbReference>
<dbReference type="GO" id="GO:0006364">
    <property type="term" value="P:rRNA processing"/>
    <property type="evidence" value="ECO:0007669"/>
    <property type="project" value="UniProtKB-UniRule"/>
</dbReference>
<dbReference type="GO" id="GO:0008033">
    <property type="term" value="P:tRNA processing"/>
    <property type="evidence" value="ECO:0007669"/>
    <property type="project" value="UniProtKB-UniRule"/>
</dbReference>
<dbReference type="CDD" id="cd04453">
    <property type="entry name" value="S1_RNase_E"/>
    <property type="match status" value="1"/>
</dbReference>
<dbReference type="FunFam" id="2.40.50.140:FF:000040">
    <property type="entry name" value="Ribonuclease E"/>
    <property type="match status" value="1"/>
</dbReference>
<dbReference type="FunFam" id="3.40.1260.20:FF:000002">
    <property type="entry name" value="Ribonuclease E"/>
    <property type="match status" value="1"/>
</dbReference>
<dbReference type="Gene3D" id="2.40.50.140">
    <property type="entry name" value="Nucleic acid-binding proteins"/>
    <property type="match status" value="1"/>
</dbReference>
<dbReference type="Gene3D" id="3.40.1260.20">
    <property type="entry name" value="Ribonuclease E, catalytic domain"/>
    <property type="match status" value="1"/>
</dbReference>
<dbReference type="HAMAP" id="MF_00970">
    <property type="entry name" value="RNase_E"/>
    <property type="match status" value="1"/>
</dbReference>
<dbReference type="InterPro" id="IPR012340">
    <property type="entry name" value="NA-bd_OB-fold"/>
</dbReference>
<dbReference type="InterPro" id="IPR019307">
    <property type="entry name" value="RNA-bd_AU-1/RNase_E/G"/>
</dbReference>
<dbReference type="InterPro" id="IPR028878">
    <property type="entry name" value="RNase_E"/>
</dbReference>
<dbReference type="InterPro" id="IPR004659">
    <property type="entry name" value="RNase_E/G"/>
</dbReference>
<dbReference type="InterPro" id="IPR048583">
    <property type="entry name" value="RNase_E_G_thioredoxin-like"/>
</dbReference>
<dbReference type="InterPro" id="IPR003029">
    <property type="entry name" value="S1_domain"/>
</dbReference>
<dbReference type="NCBIfam" id="NF008074">
    <property type="entry name" value="PRK10811.1"/>
    <property type="match status" value="1"/>
</dbReference>
<dbReference type="NCBIfam" id="TIGR00757">
    <property type="entry name" value="RNaseEG"/>
    <property type="match status" value="1"/>
</dbReference>
<dbReference type="PANTHER" id="PTHR30001">
    <property type="entry name" value="RIBONUCLEASE"/>
    <property type="match status" value="1"/>
</dbReference>
<dbReference type="PANTHER" id="PTHR30001:SF1">
    <property type="entry name" value="RIBONUCLEASE E_G-LIKE PROTEIN, CHLOROPLASTIC"/>
    <property type="match status" value="1"/>
</dbReference>
<dbReference type="Pfam" id="PF10150">
    <property type="entry name" value="RNase_E_G"/>
    <property type="match status" value="1"/>
</dbReference>
<dbReference type="Pfam" id="PF20833">
    <property type="entry name" value="RNase_E_G_Thio"/>
    <property type="match status" value="1"/>
</dbReference>
<dbReference type="Pfam" id="PF00575">
    <property type="entry name" value="S1"/>
    <property type="match status" value="1"/>
</dbReference>
<dbReference type="SMART" id="SM00316">
    <property type="entry name" value="S1"/>
    <property type="match status" value="1"/>
</dbReference>
<dbReference type="SUPFAM" id="SSF50249">
    <property type="entry name" value="Nucleic acid-binding proteins"/>
    <property type="match status" value="1"/>
</dbReference>
<dbReference type="PROSITE" id="PS50126">
    <property type="entry name" value="S1"/>
    <property type="match status" value="1"/>
</dbReference>
<accession>Q8K9J9</accession>
<protein>
    <recommendedName>
        <fullName evidence="1">Ribonuclease E</fullName>
        <shortName evidence="1">RNase E</shortName>
        <ecNumber evidence="1">3.1.26.12</ecNumber>
    </recommendedName>
</protein>
<comment type="function">
    <text evidence="1">Endoribonuclease that plays a central role in RNA processing and decay. Required for the maturation of 5S and 16S rRNAs and the majority of tRNAs. Also involved in the degradation of most mRNAs.</text>
</comment>
<comment type="catalytic activity">
    <reaction evidence="1">
        <text>Endonucleolytic cleavage of single-stranded RNA in A- and U-rich regions.</text>
        <dbReference type="EC" id="3.1.26.12"/>
    </reaction>
</comment>
<comment type="cofactor">
    <cofactor evidence="1">
        <name>Zn(2+)</name>
        <dbReference type="ChEBI" id="CHEBI:29105"/>
    </cofactor>
    <text evidence="1">Binds 2 Zn(2+) ions per homotetramer.</text>
</comment>
<comment type="cofactor">
    <cofactor evidence="1">
        <name>Mg(2+)</name>
        <dbReference type="ChEBI" id="CHEBI:18420"/>
    </cofactor>
    <text evidence="1">Binds 1 Mg(2+) ion per subunit.</text>
</comment>
<comment type="subunit">
    <text evidence="1">Component of the RNA degradosome, which is a multiprotein complex involved in RNA processing and mRNA degradation. Within the RNA degradosome, RNase E assembles into a homotetramer formed by a dimer of dimers.</text>
</comment>
<comment type="subcellular location">
    <subcellularLocation>
        <location evidence="1">Cytoplasm</location>
    </subcellularLocation>
    <subcellularLocation>
        <location evidence="1">Cell inner membrane</location>
        <topology evidence="1">Peripheral membrane protein</topology>
        <orientation evidence="1">Cytoplasmic side</orientation>
    </subcellularLocation>
</comment>
<comment type="similarity">
    <text evidence="1">Belongs to the RNase E/G family. RNase E subfamily.</text>
</comment>
<name>RNE_BUCAP</name>
<organism>
    <name type="scientific">Buchnera aphidicola subsp. Schizaphis graminum (strain Sg)</name>
    <dbReference type="NCBI Taxonomy" id="198804"/>
    <lineage>
        <taxon>Bacteria</taxon>
        <taxon>Pseudomonadati</taxon>
        <taxon>Pseudomonadota</taxon>
        <taxon>Gammaproteobacteria</taxon>
        <taxon>Enterobacterales</taxon>
        <taxon>Erwiniaceae</taxon>
        <taxon>Buchnera</taxon>
    </lineage>
</organism>
<gene>
    <name evidence="1" type="primary">rne</name>
    <name type="ordered locus">BUsg_335</name>
</gene>